<name>ACSF_PROMA</name>
<dbReference type="EC" id="1.14.13.81" evidence="1"/>
<dbReference type="EMBL" id="AE017126">
    <property type="protein sequence ID" value="AAQ00037.1"/>
    <property type="molecule type" value="Genomic_DNA"/>
</dbReference>
<dbReference type="RefSeq" id="NP_875384.1">
    <property type="nucleotide sequence ID" value="NC_005042.1"/>
</dbReference>
<dbReference type="RefSeq" id="WP_011125144.1">
    <property type="nucleotide sequence ID" value="NC_005042.1"/>
</dbReference>
<dbReference type="SMR" id="Q7VBV0"/>
<dbReference type="STRING" id="167539.Pro_0992"/>
<dbReference type="EnsemblBacteria" id="AAQ00037">
    <property type="protein sequence ID" value="AAQ00037"/>
    <property type="gene ID" value="Pro_0992"/>
</dbReference>
<dbReference type="KEGG" id="pma:Pro_0992"/>
<dbReference type="PATRIC" id="fig|167539.5.peg.1042"/>
<dbReference type="eggNOG" id="COG1633">
    <property type="taxonomic scope" value="Bacteria"/>
</dbReference>
<dbReference type="HOGENOM" id="CLU_048037_0_0_3"/>
<dbReference type="OrthoDB" id="141643at2"/>
<dbReference type="UniPathway" id="UPA00670"/>
<dbReference type="Proteomes" id="UP000001420">
    <property type="component" value="Chromosome"/>
</dbReference>
<dbReference type="GO" id="GO:0005506">
    <property type="term" value="F:iron ion binding"/>
    <property type="evidence" value="ECO:0007669"/>
    <property type="project" value="UniProtKB-UniRule"/>
</dbReference>
<dbReference type="GO" id="GO:0048529">
    <property type="term" value="F:magnesium-protoporphyrin IX monomethyl ester (oxidative) cyclase activity"/>
    <property type="evidence" value="ECO:0007669"/>
    <property type="project" value="UniProtKB-UniRule"/>
</dbReference>
<dbReference type="GO" id="GO:0036068">
    <property type="term" value="P:light-independent chlorophyll biosynthetic process"/>
    <property type="evidence" value="ECO:0007669"/>
    <property type="project" value="UniProtKB-UniRule"/>
</dbReference>
<dbReference type="GO" id="GO:0015979">
    <property type="term" value="P:photosynthesis"/>
    <property type="evidence" value="ECO:0007669"/>
    <property type="project" value="UniProtKB-UniRule"/>
</dbReference>
<dbReference type="HAMAP" id="MF_01840">
    <property type="entry name" value="AcsF"/>
    <property type="match status" value="1"/>
</dbReference>
<dbReference type="InterPro" id="IPR008434">
    <property type="entry name" value="AcsF"/>
</dbReference>
<dbReference type="InterPro" id="IPR009078">
    <property type="entry name" value="Ferritin-like_SF"/>
</dbReference>
<dbReference type="InterPro" id="IPR003251">
    <property type="entry name" value="Rr_diiron-bd_dom"/>
</dbReference>
<dbReference type="NCBIfam" id="TIGR02029">
    <property type="entry name" value="AcsF"/>
    <property type="match status" value="1"/>
</dbReference>
<dbReference type="NCBIfam" id="NF010172">
    <property type="entry name" value="PRK13654.1"/>
    <property type="match status" value="1"/>
</dbReference>
<dbReference type="PANTHER" id="PTHR31053">
    <property type="entry name" value="MAGNESIUM-PROTOPORPHYRIN IX MONOMETHYL ESTER [OXIDATIVE] CYCLASE, CHLOROPLASTIC"/>
    <property type="match status" value="1"/>
</dbReference>
<dbReference type="PANTHER" id="PTHR31053:SF2">
    <property type="entry name" value="MAGNESIUM-PROTOPORPHYRIN IX MONOMETHYL ESTER [OXIDATIVE] CYCLASE, CHLOROPLASTIC"/>
    <property type="match status" value="1"/>
</dbReference>
<dbReference type="Pfam" id="PF02915">
    <property type="entry name" value="Rubrerythrin"/>
    <property type="match status" value="1"/>
</dbReference>
<dbReference type="SUPFAM" id="SSF47240">
    <property type="entry name" value="Ferritin-like"/>
    <property type="match status" value="1"/>
</dbReference>
<protein>
    <recommendedName>
        <fullName evidence="1">Magnesium-protoporphyrin IX monomethyl ester [oxidative] cyclase</fullName>
        <shortName evidence="1">Mg-protoporphyrin IX monomethyl ester oxidative cyclase</shortName>
        <ecNumber evidence="1">1.14.13.81</ecNumber>
    </recommendedName>
</protein>
<evidence type="ECO:0000255" key="1">
    <source>
        <dbReference type="HAMAP-Rule" id="MF_01840"/>
    </source>
</evidence>
<reference key="1">
    <citation type="journal article" date="2003" name="Proc. Natl. Acad. Sci. U.S.A.">
        <title>Genome sequence of the cyanobacterium Prochlorococcus marinus SS120, a nearly minimal oxyphototrophic genome.</title>
        <authorList>
            <person name="Dufresne A."/>
            <person name="Salanoubat M."/>
            <person name="Partensky F."/>
            <person name="Artiguenave F."/>
            <person name="Axmann I.M."/>
            <person name="Barbe V."/>
            <person name="Duprat S."/>
            <person name="Galperin M.Y."/>
            <person name="Koonin E.V."/>
            <person name="Le Gall F."/>
            <person name="Makarova K.S."/>
            <person name="Ostrowski M."/>
            <person name="Oztas S."/>
            <person name="Robert C."/>
            <person name="Rogozin I.B."/>
            <person name="Scanlan D.J."/>
            <person name="Tandeau de Marsac N."/>
            <person name="Weissenbach J."/>
            <person name="Wincker P."/>
            <person name="Wolf Y.I."/>
            <person name="Hess W.R."/>
        </authorList>
    </citation>
    <scope>NUCLEOTIDE SEQUENCE [LARGE SCALE GENOMIC DNA]</scope>
    <source>
        <strain>SARG / CCMP1375 / SS120</strain>
    </source>
</reference>
<organism>
    <name type="scientific">Prochlorococcus marinus (strain SARG / CCMP1375 / SS120)</name>
    <dbReference type="NCBI Taxonomy" id="167539"/>
    <lineage>
        <taxon>Bacteria</taxon>
        <taxon>Bacillati</taxon>
        <taxon>Cyanobacteriota</taxon>
        <taxon>Cyanophyceae</taxon>
        <taxon>Synechococcales</taxon>
        <taxon>Prochlorococcaceae</taxon>
        <taxon>Prochlorococcus</taxon>
    </lineage>
</organism>
<gene>
    <name evidence="1" type="primary">acsF</name>
    <name type="ordered locus">Pro_0992</name>
</gene>
<proteinExistence type="inferred from homology"/>
<keyword id="KW-0149">Chlorophyll biosynthesis</keyword>
<keyword id="KW-0408">Iron</keyword>
<keyword id="KW-0479">Metal-binding</keyword>
<keyword id="KW-0521">NADP</keyword>
<keyword id="KW-0560">Oxidoreductase</keyword>
<keyword id="KW-0602">Photosynthesis</keyword>
<keyword id="KW-1185">Reference proteome</keyword>
<sequence length="347" mass="40465">MTTTTSGAPASLGRNELPPHLDENLLTPRFYTTEFEKAAKTDLEIARKDFEAMFKEMEADYNLKHFDRKASLERLDELSPEDKAVYESYLVRSVVSEFSGFLLFKEISNRFKKAGRQELGQFFTFLARDEARHAGFLGRALKTEGINVDLPNLPKKRAATFFPLSWVLYSLYLSEKIGYWRYILINRHLKANPDKVCAPLFDFFEPWCQDENRHGDCINLMMRCWPGMTKGFRGKLLSRFFLWTVFLTHTLTVCERGEFYELLGIDPVLFDEEVIIQTNNTSKNAFPWVYKFEDGKFLSMRIDILNAFKKWRNQNGIKKPLALGKFVLLILKQFTLPMEKTDAVRYG</sequence>
<feature type="chain" id="PRO_0000217530" description="Magnesium-protoporphyrin IX monomethyl ester [oxidative] cyclase">
    <location>
        <begin position="1"/>
        <end position="347"/>
    </location>
</feature>
<comment type="function">
    <text evidence="1">Catalyzes the formation of the isocyclic ring in chlorophyll biosynthesis. Mediates the cyclase reaction, which results in the formation of divinylprotochlorophyllide (Pchlide) characteristic of all chlorophylls from magnesium-protoporphyrin IX 13-monomethyl ester (MgPMME).</text>
</comment>
<comment type="catalytic activity">
    <reaction evidence="1">
        <text>Mg-protoporphyrin IX 13-monomethyl ester + 3 NADPH + 3 O2 + 2 H(+) = 3,8-divinyl protochlorophyllide a + 3 NADP(+) + 5 H2O</text>
        <dbReference type="Rhea" id="RHEA:33235"/>
        <dbReference type="ChEBI" id="CHEBI:15377"/>
        <dbReference type="ChEBI" id="CHEBI:15378"/>
        <dbReference type="ChEBI" id="CHEBI:15379"/>
        <dbReference type="ChEBI" id="CHEBI:57783"/>
        <dbReference type="ChEBI" id="CHEBI:58349"/>
        <dbReference type="ChEBI" id="CHEBI:58632"/>
        <dbReference type="ChEBI" id="CHEBI:60491"/>
        <dbReference type="EC" id="1.14.13.81"/>
    </reaction>
</comment>
<comment type="cofactor">
    <cofactor evidence="1">
        <name>Fe cation</name>
        <dbReference type="ChEBI" id="CHEBI:24875"/>
    </cofactor>
</comment>
<comment type="pathway">
    <text evidence="1">Porphyrin-containing compound metabolism; chlorophyll biosynthesis (light-independent).</text>
</comment>
<comment type="similarity">
    <text evidence="1">Belongs to the AcsF family.</text>
</comment>
<accession>Q7VBV0</accession>